<dbReference type="EMBL" id="FP236813">
    <property type="status" value="NOT_ANNOTATED_CDS"/>
    <property type="molecule type" value="Genomic_DNA"/>
</dbReference>
<dbReference type="EMBL" id="BC139535">
    <property type="protein sequence ID" value="AAI39536.1"/>
    <property type="status" value="ALT_INIT"/>
    <property type="molecule type" value="mRNA"/>
</dbReference>
<dbReference type="SMR" id="F1RBN2"/>
<dbReference type="STRING" id="7955.ENSDARP00000154012"/>
<dbReference type="PaxDb" id="7955-ENSDARP00000104892"/>
<dbReference type="Ensembl" id="ENSDART00000185960">
    <property type="protein sequence ID" value="ENSDARP00000154012"/>
    <property type="gene ID" value="ENSDARG00000004017"/>
</dbReference>
<dbReference type="AGR" id="ZFIN:ZDB-GENE-030131-9443"/>
<dbReference type="ZFIN" id="ZDB-GENE-030131-9443">
    <property type="gene designation" value="spag1a"/>
</dbReference>
<dbReference type="eggNOG" id="KOG1124">
    <property type="taxonomic scope" value="Eukaryota"/>
</dbReference>
<dbReference type="HOGENOM" id="CLU_061396_0_0_1"/>
<dbReference type="InParanoid" id="F1RBN2"/>
<dbReference type="OMA" id="EQDGPGW"/>
<dbReference type="PhylomeDB" id="F1RBN2"/>
<dbReference type="TreeFam" id="TF106202"/>
<dbReference type="PRO" id="PR:F1RBN2"/>
<dbReference type="Proteomes" id="UP000000437">
    <property type="component" value="Unplaced"/>
</dbReference>
<dbReference type="Bgee" id="ENSDARG00000004017">
    <property type="expression patterns" value="Expressed in granulocyte and 35 other cell types or tissues"/>
</dbReference>
<dbReference type="ExpressionAtlas" id="F1RBN2">
    <property type="expression patterns" value="baseline and differential"/>
</dbReference>
<dbReference type="GO" id="GO:0005737">
    <property type="term" value="C:cytoplasm"/>
    <property type="evidence" value="ECO:0000250"/>
    <property type="project" value="UniProtKB"/>
</dbReference>
<dbReference type="GO" id="GO:0005829">
    <property type="term" value="C:cytosol"/>
    <property type="evidence" value="ECO:0000318"/>
    <property type="project" value="GO_Central"/>
</dbReference>
<dbReference type="GO" id="GO:0120293">
    <property type="term" value="C:dynein axonemal particle"/>
    <property type="evidence" value="ECO:0007669"/>
    <property type="project" value="UniProtKB-SubCell"/>
</dbReference>
<dbReference type="GO" id="GO:0070286">
    <property type="term" value="P:axonemal dynein complex assembly"/>
    <property type="evidence" value="ECO:0000315"/>
    <property type="project" value="UniProtKB"/>
</dbReference>
<dbReference type="FunFam" id="1.25.40.10:FF:000221">
    <property type="entry name" value="Mitochondrial import receptor subunit TOM34"/>
    <property type="match status" value="1"/>
</dbReference>
<dbReference type="Gene3D" id="1.25.40.10">
    <property type="entry name" value="Tetratricopeptide repeat domain"/>
    <property type="match status" value="2"/>
</dbReference>
<dbReference type="InterPro" id="IPR051982">
    <property type="entry name" value="CiliaryAsmbly_MitoImport"/>
</dbReference>
<dbReference type="InterPro" id="IPR011990">
    <property type="entry name" value="TPR-like_helical_dom_sf"/>
</dbReference>
<dbReference type="InterPro" id="IPR019734">
    <property type="entry name" value="TPR_rpt"/>
</dbReference>
<dbReference type="PANTHER" id="PTHR45984">
    <property type="entry name" value="RNA (RNA) POLYMERASE II ASSOCIATED PROTEIN HOMOLOG"/>
    <property type="match status" value="1"/>
</dbReference>
<dbReference type="PANTHER" id="PTHR45984:SF3">
    <property type="entry name" value="SPERM-ASSOCIATED ANTIGEN 1"/>
    <property type="match status" value="1"/>
</dbReference>
<dbReference type="Pfam" id="PF00515">
    <property type="entry name" value="TPR_1"/>
    <property type="match status" value="1"/>
</dbReference>
<dbReference type="Pfam" id="PF13181">
    <property type="entry name" value="TPR_8"/>
    <property type="match status" value="1"/>
</dbReference>
<dbReference type="SMART" id="SM00028">
    <property type="entry name" value="TPR"/>
    <property type="match status" value="6"/>
</dbReference>
<dbReference type="SUPFAM" id="SSF48452">
    <property type="entry name" value="TPR-like"/>
    <property type="match status" value="2"/>
</dbReference>
<dbReference type="PROSITE" id="PS50005">
    <property type="entry name" value="TPR"/>
    <property type="match status" value="6"/>
</dbReference>
<dbReference type="PROSITE" id="PS50293">
    <property type="entry name" value="TPR_REGION"/>
    <property type="match status" value="2"/>
</dbReference>
<sequence>MSQQEVCPLNLFQSAQGTGRVCMRVCVCERGRELAVLYRAAMGNAQKKGPGYREGGGPNSQPGTPGRRRSHGLNNAANSKEVPGSSPAANGSLPAGKSQDEPQGPGSAGESCNLDAPCGALPPPLARLKNQGNMLFKNGQFGDALEKYTQAIDGCIEAGIDSPEDLCVLYSNRAACFLKDGNSADCIQDCTRALELHPFSLKPLLRRAMAYESLERYRKAYVDYKTVLQIDISVQAAHDSVHRITKMLIEQDGPDWREKLPEIPAVPLSAQQHRKEEPSAELLQARAERAEQEKARKAEARFTILKQEGNELVKNSQFQGASEKYSECLAIKPNECAIYTNRALCFLKLERFAEAKQDCDSALQMEPKNKKAFYRRALAHKGLKDYLSASTDLQEVLQLDPNVQEAEQELEMVTNLLRESLLANAQG</sequence>
<name>SPAG1_DANRE</name>
<comment type="function">
    <text evidence="3">May play a role in the cytoplasmic assembly and/or trafficking of the axonemal dynein arms.</text>
</comment>
<comment type="subcellular location">
    <subcellularLocation>
        <location evidence="1">Cytoplasm</location>
    </subcellularLocation>
    <subcellularLocation>
        <location evidence="1">Dynein axonemal particle</location>
    </subcellularLocation>
    <text evidence="1">Colocalizes with tubulin.</text>
</comment>
<comment type="disruption phenotype">
    <text evidence="3">Morpholino knockdown of the protein causes increase incidence of dorsal curvature and hydrocephalus.</text>
</comment>
<comment type="sequence caution" evidence="4">
    <conflict type="erroneous initiation">
        <sequence resource="EMBL-CDS" id="AAI39536"/>
    </conflict>
    <text>Truncated N-terminus.</text>
</comment>
<reference key="1">
    <citation type="journal article" date="2013" name="Nature">
        <title>The zebrafish reference genome sequence and its relationship to the human genome.</title>
        <authorList>
            <person name="Howe K."/>
            <person name="Clark M.D."/>
            <person name="Torroja C.F."/>
            <person name="Torrance J."/>
            <person name="Berthelot C."/>
            <person name="Muffato M."/>
            <person name="Collins J.E."/>
            <person name="Humphray S."/>
            <person name="McLaren K."/>
            <person name="Matthews L."/>
            <person name="McLaren S."/>
            <person name="Sealy I."/>
            <person name="Caccamo M."/>
            <person name="Churcher C."/>
            <person name="Scott C."/>
            <person name="Barrett J.C."/>
            <person name="Koch R."/>
            <person name="Rauch G.J."/>
            <person name="White S."/>
            <person name="Chow W."/>
            <person name="Kilian B."/>
            <person name="Quintais L.T."/>
            <person name="Guerra-Assuncao J.A."/>
            <person name="Zhou Y."/>
            <person name="Gu Y."/>
            <person name="Yen J."/>
            <person name="Vogel J.H."/>
            <person name="Eyre T."/>
            <person name="Redmond S."/>
            <person name="Banerjee R."/>
            <person name="Chi J."/>
            <person name="Fu B."/>
            <person name="Langley E."/>
            <person name="Maguire S.F."/>
            <person name="Laird G.K."/>
            <person name="Lloyd D."/>
            <person name="Kenyon E."/>
            <person name="Donaldson S."/>
            <person name="Sehra H."/>
            <person name="Almeida-King J."/>
            <person name="Loveland J."/>
            <person name="Trevanion S."/>
            <person name="Jones M."/>
            <person name="Quail M."/>
            <person name="Willey D."/>
            <person name="Hunt A."/>
            <person name="Burton J."/>
            <person name="Sims S."/>
            <person name="McLay K."/>
            <person name="Plumb B."/>
            <person name="Davis J."/>
            <person name="Clee C."/>
            <person name="Oliver K."/>
            <person name="Clark R."/>
            <person name="Riddle C."/>
            <person name="Elliot D."/>
            <person name="Threadgold G."/>
            <person name="Harden G."/>
            <person name="Ware D."/>
            <person name="Begum S."/>
            <person name="Mortimore B."/>
            <person name="Kerry G."/>
            <person name="Heath P."/>
            <person name="Phillimore B."/>
            <person name="Tracey A."/>
            <person name="Corby N."/>
            <person name="Dunn M."/>
            <person name="Johnson C."/>
            <person name="Wood J."/>
            <person name="Clark S."/>
            <person name="Pelan S."/>
            <person name="Griffiths G."/>
            <person name="Smith M."/>
            <person name="Glithero R."/>
            <person name="Howden P."/>
            <person name="Barker N."/>
            <person name="Lloyd C."/>
            <person name="Stevens C."/>
            <person name="Harley J."/>
            <person name="Holt K."/>
            <person name="Panagiotidis G."/>
            <person name="Lovell J."/>
            <person name="Beasley H."/>
            <person name="Henderson C."/>
            <person name="Gordon D."/>
            <person name="Auger K."/>
            <person name="Wright D."/>
            <person name="Collins J."/>
            <person name="Raisen C."/>
            <person name="Dyer L."/>
            <person name="Leung K."/>
            <person name="Robertson L."/>
            <person name="Ambridge K."/>
            <person name="Leongamornlert D."/>
            <person name="McGuire S."/>
            <person name="Gilderthorp R."/>
            <person name="Griffiths C."/>
            <person name="Manthravadi D."/>
            <person name="Nichol S."/>
            <person name="Barker G."/>
            <person name="Whitehead S."/>
            <person name="Kay M."/>
            <person name="Brown J."/>
            <person name="Murnane C."/>
            <person name="Gray E."/>
            <person name="Humphries M."/>
            <person name="Sycamore N."/>
            <person name="Barker D."/>
            <person name="Saunders D."/>
            <person name="Wallis J."/>
            <person name="Babbage A."/>
            <person name="Hammond S."/>
            <person name="Mashreghi-Mohammadi M."/>
            <person name="Barr L."/>
            <person name="Martin S."/>
            <person name="Wray P."/>
            <person name="Ellington A."/>
            <person name="Matthews N."/>
            <person name="Ellwood M."/>
            <person name="Woodmansey R."/>
            <person name="Clark G."/>
            <person name="Cooper J."/>
            <person name="Tromans A."/>
            <person name="Grafham D."/>
            <person name="Skuce C."/>
            <person name="Pandian R."/>
            <person name="Andrews R."/>
            <person name="Harrison E."/>
            <person name="Kimberley A."/>
            <person name="Garnett J."/>
            <person name="Fosker N."/>
            <person name="Hall R."/>
            <person name="Garner P."/>
            <person name="Kelly D."/>
            <person name="Bird C."/>
            <person name="Palmer S."/>
            <person name="Gehring I."/>
            <person name="Berger A."/>
            <person name="Dooley C.M."/>
            <person name="Ersan-Urun Z."/>
            <person name="Eser C."/>
            <person name="Geiger H."/>
            <person name="Geisler M."/>
            <person name="Karotki L."/>
            <person name="Kirn A."/>
            <person name="Konantz J."/>
            <person name="Konantz M."/>
            <person name="Oberlander M."/>
            <person name="Rudolph-Geiger S."/>
            <person name="Teucke M."/>
            <person name="Lanz C."/>
            <person name="Raddatz G."/>
            <person name="Osoegawa K."/>
            <person name="Zhu B."/>
            <person name="Rapp A."/>
            <person name="Widaa S."/>
            <person name="Langford C."/>
            <person name="Yang F."/>
            <person name="Schuster S.C."/>
            <person name="Carter N.P."/>
            <person name="Harrow J."/>
            <person name="Ning Z."/>
            <person name="Herrero J."/>
            <person name="Searle S.M."/>
            <person name="Enright A."/>
            <person name="Geisler R."/>
            <person name="Plasterk R.H."/>
            <person name="Lee C."/>
            <person name="Westerfield M."/>
            <person name="de Jong P.J."/>
            <person name="Zon L.I."/>
            <person name="Postlethwait J.H."/>
            <person name="Nusslein-Volhard C."/>
            <person name="Hubbard T.J."/>
            <person name="Roest Crollius H."/>
            <person name="Rogers J."/>
            <person name="Stemple D.L."/>
        </authorList>
    </citation>
    <scope>NUCLEOTIDE SEQUENCE [LARGE SCALE GENOMIC DNA]</scope>
    <source>
        <strain>Tuebingen</strain>
    </source>
</reference>
<reference key="2">
    <citation type="submission" date="2007-04" db="EMBL/GenBank/DDBJ databases">
        <authorList>
            <consortium name="NIH - Zebrafish Gene Collection (ZGC) project"/>
        </authorList>
    </citation>
    <scope>NUCLEOTIDE SEQUENCE [LARGE SCALE MRNA] OF 32-427</scope>
</reference>
<reference key="3">
    <citation type="journal article" date="2013" name="Am. J. Hum. Genet.">
        <title>Mutations in SPAG1 cause primary ciliary dyskinesia associated with defective outer and inner dynein arms.</title>
        <authorList>
            <person name="Knowles M.R."/>
            <person name="Ostrowski L.E."/>
            <person name="Loges N.T."/>
            <person name="Hurd T."/>
            <person name="Leigh M.W."/>
            <person name="Huang L."/>
            <person name="Wolf W.E."/>
            <person name="Carson J.L."/>
            <person name="Hazucha M.J."/>
            <person name="Yin W."/>
            <person name="Davis S.D."/>
            <person name="Dell S.D."/>
            <person name="Ferkol T.W."/>
            <person name="Sagel S.D."/>
            <person name="Olivier K.N."/>
            <person name="Jahnke C."/>
            <person name="Olbrich H."/>
            <person name="Werner C."/>
            <person name="Raidt J."/>
            <person name="Wallmeier J."/>
            <person name="Pennekamp P."/>
            <person name="Dougherty G.W."/>
            <person name="Hjeij R."/>
            <person name="Gee H.Y."/>
            <person name="Otto E.A."/>
            <person name="Halbritter J."/>
            <person name="Chaki M."/>
            <person name="Diaz K.A."/>
            <person name="Braun D.A."/>
            <person name="Porath J.D."/>
            <person name="Schueler M."/>
            <person name="Baktai G."/>
            <person name="Griese M."/>
            <person name="Turner E.H."/>
            <person name="Lewis A.P."/>
            <person name="Bamshad M.J."/>
            <person name="Nickerson D.A."/>
            <person name="Hildebrandt F."/>
            <person name="Shendure J."/>
            <person name="Omran H."/>
            <person name="Zariwala M.A."/>
        </authorList>
    </citation>
    <scope>FUNCTION</scope>
    <scope>DISRUPTION PHENOTYPE</scope>
</reference>
<organism>
    <name type="scientific">Danio rerio</name>
    <name type="common">Zebrafish</name>
    <name type="synonym">Brachydanio rerio</name>
    <dbReference type="NCBI Taxonomy" id="7955"/>
    <lineage>
        <taxon>Eukaryota</taxon>
        <taxon>Metazoa</taxon>
        <taxon>Chordata</taxon>
        <taxon>Craniata</taxon>
        <taxon>Vertebrata</taxon>
        <taxon>Euteleostomi</taxon>
        <taxon>Actinopterygii</taxon>
        <taxon>Neopterygii</taxon>
        <taxon>Teleostei</taxon>
        <taxon>Ostariophysi</taxon>
        <taxon>Cypriniformes</taxon>
        <taxon>Danionidae</taxon>
        <taxon>Danioninae</taxon>
        <taxon>Danio</taxon>
    </lineage>
</organism>
<accession>F1RBN2</accession>
<accession>A4QNV4</accession>
<gene>
    <name type="primary">spag1a</name>
    <name type="synonym">spag1</name>
</gene>
<evidence type="ECO:0000250" key="1">
    <source>
        <dbReference type="UniProtKB" id="Q07617"/>
    </source>
</evidence>
<evidence type="ECO:0000256" key="2">
    <source>
        <dbReference type="SAM" id="MobiDB-lite"/>
    </source>
</evidence>
<evidence type="ECO:0000269" key="3">
    <source>
    </source>
</evidence>
<evidence type="ECO:0000305" key="4"/>
<keyword id="KW-0963">Cytoplasm</keyword>
<keyword id="KW-1185">Reference proteome</keyword>
<keyword id="KW-0677">Repeat</keyword>
<keyword id="KW-0802">TPR repeat</keyword>
<feature type="chain" id="PRO_0000428751" description="Sperm-associated antigen 1A">
    <location>
        <begin position="1"/>
        <end position="427"/>
    </location>
</feature>
<feature type="repeat" description="TPR 1">
    <location>
        <begin position="125"/>
        <end position="158"/>
    </location>
</feature>
<feature type="repeat" description="TPR 2">
    <location>
        <begin position="167"/>
        <end position="200"/>
    </location>
</feature>
<feature type="repeat" description="TPR 3">
    <location>
        <begin position="202"/>
        <end position="234"/>
    </location>
</feature>
<feature type="repeat" description="TPR 4">
    <location>
        <begin position="302"/>
        <end position="335"/>
    </location>
</feature>
<feature type="repeat" description="TPR 5">
    <location>
        <begin position="336"/>
        <end position="369"/>
    </location>
</feature>
<feature type="repeat" description="TPR 6">
    <location>
        <begin position="371"/>
        <end position="403"/>
    </location>
</feature>
<feature type="region of interest" description="Disordered" evidence="2">
    <location>
        <begin position="46"/>
        <end position="113"/>
    </location>
</feature>
<feature type="sequence conflict" description="In Ref. 2; AAI39536." evidence="4" ref="2">
    <original>P</original>
    <variation>L</variation>
    <location>
        <position position="105"/>
    </location>
</feature>
<protein>
    <recommendedName>
        <fullName>Sperm-associated antigen 1A</fullName>
    </recommendedName>
</protein>
<proteinExistence type="evidence at transcript level"/>